<gene>
    <name evidence="1" type="primary">hemA</name>
    <name type="ordered locus">SSPA1023</name>
</gene>
<protein>
    <recommendedName>
        <fullName evidence="1">Glutamyl-tRNA reductase</fullName>
        <shortName evidence="1">GluTR</shortName>
        <ecNumber evidence="1">1.2.1.70</ecNumber>
    </recommendedName>
</protein>
<organism>
    <name type="scientific">Salmonella paratyphi A (strain AKU_12601)</name>
    <dbReference type="NCBI Taxonomy" id="554290"/>
    <lineage>
        <taxon>Bacteria</taxon>
        <taxon>Pseudomonadati</taxon>
        <taxon>Pseudomonadota</taxon>
        <taxon>Gammaproteobacteria</taxon>
        <taxon>Enterobacterales</taxon>
        <taxon>Enterobacteriaceae</taxon>
        <taxon>Salmonella</taxon>
    </lineage>
</organism>
<reference key="1">
    <citation type="journal article" date="2009" name="BMC Genomics">
        <title>Pseudogene accumulation in the evolutionary histories of Salmonella enterica serovars Paratyphi A and Typhi.</title>
        <authorList>
            <person name="Holt K.E."/>
            <person name="Thomson N.R."/>
            <person name="Wain J."/>
            <person name="Langridge G.C."/>
            <person name="Hasan R."/>
            <person name="Bhutta Z.A."/>
            <person name="Quail M.A."/>
            <person name="Norbertczak H."/>
            <person name="Walker D."/>
            <person name="Simmonds M."/>
            <person name="White B."/>
            <person name="Bason N."/>
            <person name="Mungall K."/>
            <person name="Dougan G."/>
            <person name="Parkhill J."/>
        </authorList>
    </citation>
    <scope>NUCLEOTIDE SEQUENCE [LARGE SCALE GENOMIC DNA]</scope>
    <source>
        <strain>AKU_12601</strain>
    </source>
</reference>
<sequence length="418" mass="46105">MTLLALGINHKTAPVSLRERVTFSPDTLDQALDSLLAQPMVQGGVVLSTCNRTELYLSVEEQDNLQEALIRWLCDYHNLNEDDLRNSLYWHQDNDAVSHLMRVASGLDSLVLGEPQILGQVKKAFADSQKGHLNASALERMFQKSFSVAKRVRTETDIGASAVSVAFAACTLARQIFESLSTVTVLLVGAGETIELVARHLREHKVQKMIIANRTRERAQALADEVGAEVISLSDIDARLQDADIIISSTASPLPIIGKGMVERALKSRRNQPMLLVDIAVPRDVEPEVGKLANAYLYSVDDLQSIISHNLAQRQAAAVEAETIVEQEASEFMAWLRAQGASETIREYRSQSEQIRDELTTKALSALQQGGDAQAILQDLAWKLTNRLIHAPTKSLQQAARDGDDERLNILRDSLGLE</sequence>
<keyword id="KW-0521">NADP</keyword>
<keyword id="KW-0560">Oxidoreductase</keyword>
<keyword id="KW-0627">Porphyrin biosynthesis</keyword>
<dbReference type="EC" id="1.2.1.70" evidence="1"/>
<dbReference type="EMBL" id="FM200053">
    <property type="protein sequence ID" value="CAR59176.1"/>
    <property type="molecule type" value="Genomic_DNA"/>
</dbReference>
<dbReference type="RefSeq" id="WP_000173208.1">
    <property type="nucleotide sequence ID" value="NC_011147.1"/>
</dbReference>
<dbReference type="SMR" id="B5BI74"/>
<dbReference type="KEGG" id="sek:SSPA1023"/>
<dbReference type="HOGENOM" id="CLU_035113_2_2_6"/>
<dbReference type="UniPathway" id="UPA00251">
    <property type="reaction ID" value="UER00316"/>
</dbReference>
<dbReference type="Proteomes" id="UP000001869">
    <property type="component" value="Chromosome"/>
</dbReference>
<dbReference type="GO" id="GO:0008883">
    <property type="term" value="F:glutamyl-tRNA reductase activity"/>
    <property type="evidence" value="ECO:0007669"/>
    <property type="project" value="UniProtKB-UniRule"/>
</dbReference>
<dbReference type="GO" id="GO:0050661">
    <property type="term" value="F:NADP binding"/>
    <property type="evidence" value="ECO:0007669"/>
    <property type="project" value="InterPro"/>
</dbReference>
<dbReference type="GO" id="GO:0019353">
    <property type="term" value="P:protoporphyrinogen IX biosynthetic process from glutamate"/>
    <property type="evidence" value="ECO:0007669"/>
    <property type="project" value="TreeGrafter"/>
</dbReference>
<dbReference type="CDD" id="cd05213">
    <property type="entry name" value="NAD_bind_Glutamyl_tRNA_reduct"/>
    <property type="match status" value="1"/>
</dbReference>
<dbReference type="FunFam" id="3.30.460.30:FF:000001">
    <property type="entry name" value="Glutamyl-tRNA reductase"/>
    <property type="match status" value="1"/>
</dbReference>
<dbReference type="FunFam" id="3.40.50.720:FF:000031">
    <property type="entry name" value="Glutamyl-tRNA reductase"/>
    <property type="match status" value="1"/>
</dbReference>
<dbReference type="Gene3D" id="3.30.460.30">
    <property type="entry name" value="Glutamyl-tRNA reductase, N-terminal domain"/>
    <property type="match status" value="1"/>
</dbReference>
<dbReference type="Gene3D" id="3.40.50.720">
    <property type="entry name" value="NAD(P)-binding Rossmann-like Domain"/>
    <property type="match status" value="1"/>
</dbReference>
<dbReference type="HAMAP" id="MF_00087">
    <property type="entry name" value="Glu_tRNA_reductase"/>
    <property type="match status" value="1"/>
</dbReference>
<dbReference type="InterPro" id="IPR000343">
    <property type="entry name" value="4pyrrol_synth_GluRdtase"/>
</dbReference>
<dbReference type="InterPro" id="IPR015896">
    <property type="entry name" value="4pyrrol_synth_GluRdtase_dimer"/>
</dbReference>
<dbReference type="InterPro" id="IPR015895">
    <property type="entry name" value="4pyrrol_synth_GluRdtase_N"/>
</dbReference>
<dbReference type="InterPro" id="IPR018214">
    <property type="entry name" value="GluRdtase_CS"/>
</dbReference>
<dbReference type="InterPro" id="IPR036453">
    <property type="entry name" value="GluRdtase_dimer_dom_sf"/>
</dbReference>
<dbReference type="InterPro" id="IPR036343">
    <property type="entry name" value="GluRdtase_N_sf"/>
</dbReference>
<dbReference type="InterPro" id="IPR036291">
    <property type="entry name" value="NAD(P)-bd_dom_sf"/>
</dbReference>
<dbReference type="InterPro" id="IPR006151">
    <property type="entry name" value="Shikm_DH/Glu-tRNA_Rdtase"/>
</dbReference>
<dbReference type="NCBIfam" id="TIGR01035">
    <property type="entry name" value="hemA"/>
    <property type="match status" value="1"/>
</dbReference>
<dbReference type="PANTHER" id="PTHR43013">
    <property type="entry name" value="GLUTAMYL-TRNA REDUCTASE"/>
    <property type="match status" value="1"/>
</dbReference>
<dbReference type="PANTHER" id="PTHR43013:SF1">
    <property type="entry name" value="GLUTAMYL-TRNA REDUCTASE"/>
    <property type="match status" value="1"/>
</dbReference>
<dbReference type="Pfam" id="PF00745">
    <property type="entry name" value="GlutR_dimer"/>
    <property type="match status" value="1"/>
</dbReference>
<dbReference type="Pfam" id="PF05201">
    <property type="entry name" value="GlutR_N"/>
    <property type="match status" value="1"/>
</dbReference>
<dbReference type="Pfam" id="PF01488">
    <property type="entry name" value="Shikimate_DH"/>
    <property type="match status" value="1"/>
</dbReference>
<dbReference type="PIRSF" id="PIRSF000445">
    <property type="entry name" value="4pyrrol_synth_GluRdtase"/>
    <property type="match status" value="1"/>
</dbReference>
<dbReference type="SUPFAM" id="SSF69742">
    <property type="entry name" value="Glutamyl tRNA-reductase catalytic, N-terminal domain"/>
    <property type="match status" value="1"/>
</dbReference>
<dbReference type="SUPFAM" id="SSF69075">
    <property type="entry name" value="Glutamyl tRNA-reductase dimerization domain"/>
    <property type="match status" value="1"/>
</dbReference>
<dbReference type="SUPFAM" id="SSF51735">
    <property type="entry name" value="NAD(P)-binding Rossmann-fold domains"/>
    <property type="match status" value="1"/>
</dbReference>
<dbReference type="PROSITE" id="PS00747">
    <property type="entry name" value="GLUTR"/>
    <property type="match status" value="1"/>
</dbReference>
<evidence type="ECO:0000255" key="1">
    <source>
        <dbReference type="HAMAP-Rule" id="MF_00087"/>
    </source>
</evidence>
<accession>B5BI74</accession>
<proteinExistence type="inferred from homology"/>
<name>HEM1_SALPK</name>
<feature type="chain" id="PRO_1000093167" description="Glutamyl-tRNA reductase">
    <location>
        <begin position="1"/>
        <end position="418"/>
    </location>
</feature>
<feature type="active site" description="Nucleophile" evidence="1">
    <location>
        <position position="50"/>
    </location>
</feature>
<feature type="binding site" evidence="1">
    <location>
        <begin position="49"/>
        <end position="52"/>
    </location>
    <ligand>
        <name>substrate</name>
    </ligand>
</feature>
<feature type="binding site" evidence="1">
    <location>
        <position position="109"/>
    </location>
    <ligand>
        <name>substrate</name>
    </ligand>
</feature>
<feature type="binding site" evidence="1">
    <location>
        <begin position="114"/>
        <end position="116"/>
    </location>
    <ligand>
        <name>substrate</name>
    </ligand>
</feature>
<feature type="binding site" evidence="1">
    <location>
        <position position="120"/>
    </location>
    <ligand>
        <name>substrate</name>
    </ligand>
</feature>
<feature type="binding site" evidence="1">
    <location>
        <begin position="189"/>
        <end position="194"/>
    </location>
    <ligand>
        <name>NADP(+)</name>
        <dbReference type="ChEBI" id="CHEBI:58349"/>
    </ligand>
</feature>
<feature type="site" description="Important for activity" evidence="1">
    <location>
        <position position="99"/>
    </location>
</feature>
<comment type="function">
    <text evidence="1">Catalyzes the NADPH-dependent reduction of glutamyl-tRNA(Glu) to glutamate 1-semialdehyde (GSA).</text>
</comment>
<comment type="catalytic activity">
    <reaction evidence="1">
        <text>(S)-4-amino-5-oxopentanoate + tRNA(Glu) + NADP(+) = L-glutamyl-tRNA(Glu) + NADPH + H(+)</text>
        <dbReference type="Rhea" id="RHEA:12344"/>
        <dbReference type="Rhea" id="RHEA-COMP:9663"/>
        <dbReference type="Rhea" id="RHEA-COMP:9680"/>
        <dbReference type="ChEBI" id="CHEBI:15378"/>
        <dbReference type="ChEBI" id="CHEBI:57501"/>
        <dbReference type="ChEBI" id="CHEBI:57783"/>
        <dbReference type="ChEBI" id="CHEBI:58349"/>
        <dbReference type="ChEBI" id="CHEBI:78442"/>
        <dbReference type="ChEBI" id="CHEBI:78520"/>
        <dbReference type="EC" id="1.2.1.70"/>
    </reaction>
</comment>
<comment type="pathway">
    <text evidence="1">Porphyrin-containing compound metabolism; protoporphyrin-IX biosynthesis; 5-aminolevulinate from L-glutamyl-tRNA(Glu): step 1/2.</text>
</comment>
<comment type="subunit">
    <text evidence="1">Homodimer.</text>
</comment>
<comment type="domain">
    <text evidence="1">Possesses an unusual extended V-shaped dimeric structure with each monomer consisting of three distinct domains arranged along a curved 'spinal' alpha-helix. The N-terminal catalytic domain specifically recognizes the glutamate moiety of the substrate. The second domain is the NADPH-binding domain, and the third C-terminal domain is responsible for dimerization.</text>
</comment>
<comment type="miscellaneous">
    <text evidence="1">During catalysis, the active site Cys acts as a nucleophile attacking the alpha-carbonyl group of tRNA-bound glutamate with the formation of a thioester intermediate between enzyme and glutamate, and the concomitant release of tRNA(Glu). The thioester intermediate is finally reduced by direct hydride transfer from NADPH, to form the product GSA.</text>
</comment>
<comment type="similarity">
    <text evidence="1">Belongs to the glutamyl-tRNA reductase family.</text>
</comment>